<dbReference type="EMBL" id="AF036893">
    <property type="protein sequence ID" value="AAC39942.1"/>
    <property type="molecule type" value="mRNA"/>
</dbReference>
<dbReference type="EMBL" id="AF035830">
    <property type="protein sequence ID" value="AAC53592.1"/>
    <property type="molecule type" value="mRNA"/>
</dbReference>
<dbReference type="CCDS" id="CCDS35663.1"/>
<dbReference type="PIR" id="T09493">
    <property type="entry name" value="T09493"/>
</dbReference>
<dbReference type="RefSeq" id="NP_035196.2">
    <property type="nucleotide sequence ID" value="NM_011066.3"/>
</dbReference>
<dbReference type="PDB" id="3GDI">
    <property type="method" value="X-ray"/>
    <property type="resolution" value="2.40 A"/>
    <property type="chains" value="A/B=170-473"/>
</dbReference>
<dbReference type="PDB" id="4CT0">
    <property type="method" value="X-ray"/>
    <property type="resolution" value="2.45 A"/>
    <property type="chains" value="B=1132-1252"/>
</dbReference>
<dbReference type="PDB" id="4U8H">
    <property type="method" value="X-ray"/>
    <property type="resolution" value="2.80 A"/>
    <property type="chains" value="B/D=1095-1215"/>
</dbReference>
<dbReference type="PDB" id="8OKF">
    <property type="method" value="X-ray"/>
    <property type="resolution" value="1.85 A"/>
    <property type="chains" value="B=1197-1211"/>
</dbReference>
<dbReference type="PDBsum" id="3GDI"/>
<dbReference type="PDBsum" id="4CT0"/>
<dbReference type="PDBsum" id="4U8H"/>
<dbReference type="PDBsum" id="8OKF"/>
<dbReference type="SMR" id="O54943"/>
<dbReference type="BioGRID" id="202112">
    <property type="interactions" value="31"/>
</dbReference>
<dbReference type="ComplexPortal" id="CPX-3209">
    <property type="entry name" value="Cry1-Per2 complex"/>
</dbReference>
<dbReference type="ComplexPortal" id="CPX-3210">
    <property type="entry name" value="Cry2-Per2 complex"/>
</dbReference>
<dbReference type="CORUM" id="O54943"/>
<dbReference type="DIP" id="DIP-38518N"/>
<dbReference type="ELM" id="O54943"/>
<dbReference type="FunCoup" id="O54943">
    <property type="interactions" value="1997"/>
</dbReference>
<dbReference type="IntAct" id="O54943">
    <property type="interactions" value="38"/>
</dbReference>
<dbReference type="MINT" id="O54943"/>
<dbReference type="STRING" id="10090.ENSMUSP00000066620"/>
<dbReference type="GlyGen" id="O54943">
    <property type="glycosylation" value="2 sites"/>
</dbReference>
<dbReference type="iPTMnet" id="O54943"/>
<dbReference type="PhosphoSitePlus" id="O54943"/>
<dbReference type="PaxDb" id="10090-ENSMUSP00000066620"/>
<dbReference type="ProteomicsDB" id="288029"/>
<dbReference type="DNASU" id="18627"/>
<dbReference type="GeneID" id="18627"/>
<dbReference type="KEGG" id="mmu:18627"/>
<dbReference type="AGR" id="MGI:1195265"/>
<dbReference type="CTD" id="8864"/>
<dbReference type="MGI" id="MGI:1195265">
    <property type="gene designation" value="Per2"/>
</dbReference>
<dbReference type="eggNOG" id="KOG3753">
    <property type="taxonomic scope" value="Eukaryota"/>
</dbReference>
<dbReference type="InParanoid" id="O54943"/>
<dbReference type="OrthoDB" id="7788983at2759"/>
<dbReference type="PhylomeDB" id="O54943"/>
<dbReference type="TreeFam" id="TF318445"/>
<dbReference type="BioGRID-ORCS" id="18627">
    <property type="hits" value="2 hits in 77 CRISPR screens"/>
</dbReference>
<dbReference type="ChiTaRS" id="Per2">
    <property type="organism name" value="mouse"/>
</dbReference>
<dbReference type="EvolutionaryTrace" id="O54943"/>
<dbReference type="PRO" id="PR:O54943"/>
<dbReference type="Proteomes" id="UP000000589">
    <property type="component" value="Unplaced"/>
</dbReference>
<dbReference type="RNAct" id="O54943">
    <property type="molecule type" value="protein"/>
</dbReference>
<dbReference type="GO" id="GO:1990512">
    <property type="term" value="C:Cry-Per complex"/>
    <property type="evidence" value="ECO:0000353"/>
    <property type="project" value="ComplexPortal"/>
</dbReference>
<dbReference type="GO" id="GO:0005737">
    <property type="term" value="C:cytoplasm"/>
    <property type="evidence" value="ECO:0000314"/>
    <property type="project" value="UniProtKB"/>
</dbReference>
<dbReference type="GO" id="GO:0005829">
    <property type="term" value="C:cytosol"/>
    <property type="evidence" value="ECO:0000304"/>
    <property type="project" value="Reactome"/>
</dbReference>
<dbReference type="GO" id="GO:0005654">
    <property type="term" value="C:nucleoplasm"/>
    <property type="evidence" value="ECO:0000304"/>
    <property type="project" value="Reactome"/>
</dbReference>
<dbReference type="GO" id="GO:0005634">
    <property type="term" value="C:nucleus"/>
    <property type="evidence" value="ECO:0000314"/>
    <property type="project" value="UniProtKB"/>
</dbReference>
<dbReference type="GO" id="GO:0048471">
    <property type="term" value="C:perinuclear region of cytoplasm"/>
    <property type="evidence" value="ECO:0000314"/>
    <property type="project" value="UniProtKB"/>
</dbReference>
<dbReference type="GO" id="GO:0140297">
    <property type="term" value="F:DNA-binding transcription factor binding"/>
    <property type="evidence" value="ECO:0000353"/>
    <property type="project" value="UniProtKB"/>
</dbReference>
<dbReference type="GO" id="GO:0042826">
    <property type="term" value="F:histone deacetylase binding"/>
    <property type="evidence" value="ECO:0000353"/>
    <property type="project" value="UniProtKB"/>
</dbReference>
<dbReference type="GO" id="GO:1990226">
    <property type="term" value="F:histone methyltransferase binding"/>
    <property type="evidence" value="ECO:0000353"/>
    <property type="project" value="UniProtKB"/>
</dbReference>
<dbReference type="GO" id="GO:0042802">
    <property type="term" value="F:identical protein binding"/>
    <property type="evidence" value="ECO:0000353"/>
    <property type="project" value="IntAct"/>
</dbReference>
<dbReference type="GO" id="GO:0019900">
    <property type="term" value="F:kinase binding"/>
    <property type="evidence" value="ECO:0000353"/>
    <property type="project" value="UniProtKB"/>
</dbReference>
<dbReference type="GO" id="GO:0016922">
    <property type="term" value="F:nuclear receptor binding"/>
    <property type="evidence" value="ECO:0000353"/>
    <property type="project" value="UniProtKB"/>
</dbReference>
<dbReference type="GO" id="GO:0036002">
    <property type="term" value="F:pre-mRNA binding"/>
    <property type="evidence" value="ECO:0000314"/>
    <property type="project" value="UniProtKB"/>
</dbReference>
<dbReference type="GO" id="GO:0070063">
    <property type="term" value="F:RNA polymerase binding"/>
    <property type="evidence" value="ECO:0000353"/>
    <property type="project" value="UniProtKB"/>
</dbReference>
<dbReference type="GO" id="GO:0000978">
    <property type="term" value="F:RNA polymerase II cis-regulatory region sequence-specific DNA binding"/>
    <property type="evidence" value="ECO:0000314"/>
    <property type="project" value="UniProtKB"/>
</dbReference>
<dbReference type="GO" id="GO:0000976">
    <property type="term" value="F:transcription cis-regulatory region binding"/>
    <property type="evidence" value="ECO:0000314"/>
    <property type="project" value="UniProtKB"/>
</dbReference>
<dbReference type="GO" id="GO:0003713">
    <property type="term" value="F:transcription coactivator activity"/>
    <property type="evidence" value="ECO:0000314"/>
    <property type="project" value="UniProtKB"/>
</dbReference>
<dbReference type="GO" id="GO:0001222">
    <property type="term" value="F:transcription corepressor binding"/>
    <property type="evidence" value="ECO:0000353"/>
    <property type="project" value="UniProtKB"/>
</dbReference>
<dbReference type="GO" id="GO:0140416">
    <property type="term" value="F:transcription regulator inhibitor activity"/>
    <property type="evidence" value="ECO:0000353"/>
    <property type="project" value="UniProtKB"/>
</dbReference>
<dbReference type="GO" id="GO:0006338">
    <property type="term" value="P:chromatin remodeling"/>
    <property type="evidence" value="ECO:0000315"/>
    <property type="project" value="UniProtKB"/>
</dbReference>
<dbReference type="GO" id="GO:0032922">
    <property type="term" value="P:circadian regulation of gene expression"/>
    <property type="evidence" value="ECO:0000314"/>
    <property type="project" value="UniProtKB"/>
</dbReference>
<dbReference type="GO" id="GO:0007623">
    <property type="term" value="P:circadian rhythm"/>
    <property type="evidence" value="ECO:0000314"/>
    <property type="project" value="MGI"/>
</dbReference>
<dbReference type="GO" id="GO:0006631">
    <property type="term" value="P:fatty acid metabolic process"/>
    <property type="evidence" value="ECO:0000315"/>
    <property type="project" value="UniProtKB"/>
</dbReference>
<dbReference type="GO" id="GO:0006094">
    <property type="term" value="P:gluconeogenesis"/>
    <property type="evidence" value="ECO:0000315"/>
    <property type="project" value="UniProtKB"/>
</dbReference>
<dbReference type="GO" id="GO:0005978">
    <property type="term" value="P:glycogen biosynthetic process"/>
    <property type="evidence" value="ECO:0000315"/>
    <property type="project" value="UniProtKB"/>
</dbReference>
<dbReference type="GO" id="GO:0019249">
    <property type="term" value="P:lactate biosynthetic process"/>
    <property type="evidence" value="ECO:0000315"/>
    <property type="project" value="UniProtKB"/>
</dbReference>
<dbReference type="GO" id="GO:0042754">
    <property type="term" value="P:negative regulation of circadian rhythm"/>
    <property type="evidence" value="ECO:0000314"/>
    <property type="project" value="UniProtKB"/>
</dbReference>
<dbReference type="GO" id="GO:0045892">
    <property type="term" value="P:negative regulation of DNA-templated transcription"/>
    <property type="evidence" value="ECO:0000314"/>
    <property type="project" value="UniProtKB"/>
</dbReference>
<dbReference type="GO" id="GO:0070345">
    <property type="term" value="P:negative regulation of fat cell proliferation"/>
    <property type="evidence" value="ECO:0000315"/>
    <property type="project" value="UniProtKB"/>
</dbReference>
<dbReference type="GO" id="GO:0031397">
    <property type="term" value="P:negative regulation of protein ubiquitination"/>
    <property type="evidence" value="ECO:0000314"/>
    <property type="project" value="UniProtKB"/>
</dbReference>
<dbReference type="GO" id="GO:0060567">
    <property type="term" value="P:negative regulation of termination of DNA-templated transcription"/>
    <property type="evidence" value="ECO:0000314"/>
    <property type="project" value="UniProtKB"/>
</dbReference>
<dbReference type="GO" id="GO:0000122">
    <property type="term" value="P:negative regulation of transcription by RNA polymerase II"/>
    <property type="evidence" value="ECO:0000314"/>
    <property type="project" value="MGI"/>
</dbReference>
<dbReference type="GO" id="GO:0120162">
    <property type="term" value="P:positive regulation of cold-induced thermogenesis"/>
    <property type="evidence" value="ECO:0000315"/>
    <property type="project" value="YuBioLab"/>
</dbReference>
<dbReference type="GO" id="GO:0051726">
    <property type="term" value="P:regulation of cell cycle"/>
    <property type="evidence" value="ECO:0000315"/>
    <property type="project" value="UniProtKB"/>
</dbReference>
<dbReference type="GO" id="GO:0042752">
    <property type="term" value="P:regulation of circadian rhythm"/>
    <property type="evidence" value="ECO:0000315"/>
    <property type="project" value="UniProtKB"/>
</dbReference>
<dbReference type="GO" id="GO:0051946">
    <property type="term" value="P:regulation of glutamate uptake involved in transmission of nerve impulse"/>
    <property type="evidence" value="ECO:0000315"/>
    <property type="project" value="UniProtKB"/>
</dbReference>
<dbReference type="GO" id="GO:0050796">
    <property type="term" value="P:regulation of insulin secretion"/>
    <property type="evidence" value="ECO:0000315"/>
    <property type="project" value="UniProtKB"/>
</dbReference>
<dbReference type="GO" id="GO:0050767">
    <property type="term" value="P:regulation of neurogenesis"/>
    <property type="evidence" value="ECO:0000315"/>
    <property type="project" value="UniProtKB"/>
</dbReference>
<dbReference type="GO" id="GO:0019229">
    <property type="term" value="P:regulation of vasoconstriction"/>
    <property type="evidence" value="ECO:0000315"/>
    <property type="project" value="UniProtKB"/>
</dbReference>
<dbReference type="GO" id="GO:0002931">
    <property type="term" value="P:response to ischemia"/>
    <property type="evidence" value="ECO:0000315"/>
    <property type="project" value="UniProtKB"/>
</dbReference>
<dbReference type="GO" id="GO:0050872">
    <property type="term" value="P:white fat cell differentiation"/>
    <property type="evidence" value="ECO:0000315"/>
    <property type="project" value="UniProtKB"/>
</dbReference>
<dbReference type="CDD" id="cd00130">
    <property type="entry name" value="PAS"/>
    <property type="match status" value="1"/>
</dbReference>
<dbReference type="FunFam" id="3.30.450.20:FF:000013">
    <property type="entry name" value="Period circadian protein homolog 2"/>
    <property type="match status" value="1"/>
</dbReference>
<dbReference type="FunFam" id="3.30.450.20:FF:000004">
    <property type="entry name" value="Period circadian protein homolog 3"/>
    <property type="match status" value="1"/>
</dbReference>
<dbReference type="Gene3D" id="3.30.450.20">
    <property type="entry name" value="PAS domain"/>
    <property type="match status" value="2"/>
</dbReference>
<dbReference type="IDEAL" id="IID50265"/>
<dbReference type="InterPro" id="IPR000014">
    <property type="entry name" value="PAS"/>
</dbReference>
<dbReference type="InterPro" id="IPR035965">
    <property type="entry name" value="PAS-like_dom_sf"/>
</dbReference>
<dbReference type="InterPro" id="IPR013655">
    <property type="entry name" value="PAS_fold_3"/>
</dbReference>
<dbReference type="InterPro" id="IPR048814">
    <property type="entry name" value="Per1-3_PAS-A"/>
</dbReference>
<dbReference type="InterPro" id="IPR022728">
    <property type="entry name" value="Period_circadian-like_C"/>
</dbReference>
<dbReference type="InterPro" id="IPR050760">
    <property type="entry name" value="Period_circadian_regulator"/>
</dbReference>
<dbReference type="PANTHER" id="PTHR11269">
    <property type="entry name" value="PERIOD CIRCADIAN PROTEIN"/>
    <property type="match status" value="1"/>
</dbReference>
<dbReference type="PANTHER" id="PTHR11269:SF9">
    <property type="entry name" value="PERIOD CIRCADIAN PROTEIN HOMOLOG 2"/>
    <property type="match status" value="1"/>
</dbReference>
<dbReference type="Pfam" id="PF23170">
    <property type="entry name" value="bHLH_PER"/>
    <property type="match status" value="1"/>
</dbReference>
<dbReference type="Pfam" id="PF08447">
    <property type="entry name" value="PAS_3"/>
    <property type="match status" value="1"/>
</dbReference>
<dbReference type="Pfam" id="PF21353">
    <property type="entry name" value="Per3-like_PAS-A"/>
    <property type="match status" value="1"/>
</dbReference>
<dbReference type="Pfam" id="PF12114">
    <property type="entry name" value="Period_C"/>
    <property type="match status" value="1"/>
</dbReference>
<dbReference type="SMART" id="SM00091">
    <property type="entry name" value="PAS"/>
    <property type="match status" value="2"/>
</dbReference>
<dbReference type="SUPFAM" id="SSF55785">
    <property type="entry name" value="PYP-like sensor domain (PAS domain)"/>
    <property type="match status" value="1"/>
</dbReference>
<dbReference type="PROSITE" id="PS50112">
    <property type="entry name" value="PAS"/>
    <property type="match status" value="1"/>
</dbReference>
<accession>O54943</accession>
<accession>O54954</accession>
<keyword id="KW-0002">3D-structure</keyword>
<keyword id="KW-0007">Acetylation</keyword>
<keyword id="KW-0090">Biological rhythms</keyword>
<keyword id="KW-0963">Cytoplasm</keyword>
<keyword id="KW-0539">Nucleus</keyword>
<keyword id="KW-0597">Phosphoprotein</keyword>
<keyword id="KW-1185">Reference proteome</keyword>
<keyword id="KW-0677">Repeat</keyword>
<keyword id="KW-0804">Transcription</keyword>
<keyword id="KW-0805">Transcription regulation</keyword>
<keyword id="KW-0832">Ubl conjugation</keyword>
<proteinExistence type="evidence at protein level"/>
<gene>
    <name type="primary">Per2</name>
</gene>
<protein>
    <recommendedName>
        <fullName>Period circadian protein homolog 2</fullName>
        <shortName>mPER2</shortName>
    </recommendedName>
    <alternativeName>
        <fullName>Circadian clock protein PERIOD 2</fullName>
    </alternativeName>
</protein>
<comment type="function">
    <text evidence="5 7 15 17 18 24 25 26 28 30 31 32 35 36 39 41 44">Transcriptional repressor which forms a core component of the circadian clock. The circadian clock, an internal time-keeping system, regulates various physiological processes through the generation of approximately 24 hour circadian rhythms in gene expression, which are translated into rhythms in metabolism and behavior. It is derived from the Latin roots 'circa' (about) and 'diem' (day) and acts as an important regulator of a wide array of physiological functions including metabolism, sleep, body temperature, blood pressure, endocrine, immune, cardiovascular, and renal function. Consists of two major components: the central clock, residing in the suprachiasmatic nucleus (SCN) of the brain, and the peripheral clocks that are present in nearly every tissue and organ system. Both the central and peripheral clocks can be reset by environmental cues, also known as Zeitgebers (German for 'timegivers'). The predominant Zeitgeber for the central clock is light, which is sensed by retina and signals directly to the SCN. The central clock entrains the peripheral clocks through neuronal and hormonal signals, body temperature and feeding-related cues, aligning all clocks with the external light/dark cycle. Circadian rhythms allow an organism to achieve temporal homeostasis with its environment at the molecular level by regulating gene expression to create a peak of protein expression once every 24 hours to control when a particular physiological process is most active with respect to the solar day. Transcription and translation of core clock components (CLOCK, NPAS2, BMAL1, BMAL2, PER1, PER2, PER3, CRY1 and CRY2) plays a critical role in rhythm generation, whereas delays imposed by post-translational modifications (PTMs) are important for determining the period (tau) of the rhythms (tau refers to the period of a rhythm and is the length, in time, of one complete cycle). A diurnal rhythm is synchronized with the day/night cycle, while the ultradian and infradian rhythms have a period shorter and longer than 24 hours, respectively. Disruptions in the circadian rhythms contribute to the pathology of cardiovascular diseases, cancer, metabolic syndrome and aging. A transcription/translation feedback loop (TTFL) forms the core of the molecular circadian clock mechanism. Transcription factors, CLOCK or NPAS2 and BMAL1 or BMAL2, form the positive limb of the feedback loop, act in the form of a heterodimer and activate the transcription of core clock genes and clock-controlled genes (involved in key metabolic processes), harboring E-box elements (5'-CACGTG-3') within their promoters. The core clock genes: PER1/2/3 and CRY1/2 which are transcriptional repressors form the negative limb of the feedback loop and interact with the CLOCK|NPAS2-BMAL1|BMAL2 heterodimer inhibiting its activity and thereby negatively regulating their own expression. This heterodimer also activates nuclear receptors NR1D1/2 and RORA/B/G, which form a second feedback loop and which activate and repress BMAL1 transcription, respectively. PER1 and PER2 proteins transport CRY1 and CRY2 into the nucleus with appropriate circadian timing, but also contribute directly to repression of clock-controlled target genes through interaction with several classes of RNA-binding proteins, helicases and others transcriptional repressors. PER appears to regulate circadian control of transcription by at least three different modes. First, interacts directly with the CLOCK-BMAL1 at the tail end of the nascent transcript peak to recruit complexes containing the SIN3-HDAC that remodel chromatin to repress transcription. Second, brings H3K9 methyltransferases such as SUV39H1 and SUV39H2 to the E-box elements of the circadian target genes, like PER2 itself or PER1. The recruitment of each repressive modifier to the DNA seems to be very precisely temporally orchestrated by the large PER complex, the deacetylases acting before than the methyltransferases. Additionally, large PER complexes are also recruited to the target genes 3' termination site through interactions with RNA-binding proteins and helicases that may play a role in transcription termination to regulate transcription independently of CLOCK-BMAL1 interactions. Recruitment of large PER complexes to the elongating polymerase at PER and CRY termination sites inhibited SETX action, impeding RNA polymerase II release and thereby repressing transcriptional reinitiation. May propagate clock information to metabolic pathways via the interaction with nuclear receptors. Coactivator of PPARA and corepressor of NR1D1, binds rhythmically at the promoter of nuclear receptors target genes like BMAL1 or G6PC1. Directly and specifically represses PPARG proadipogenic activity by blocking PPARG recruitment to target promoters and thereby transcriptional activation. Required for fatty acid and lipid metabolism, is involved as well in the regulation of circulating insulin levels. Plays an important role in the maintenance of cardiovascular functions through the regulation of NO and vasodilatatory prostaglandins production in aortas. Controls circadian glutamate uptake in synaptic vesicles through the regulation of VGLUT1 expression. May also be involved in the regulation of inflammatory processes. Represses the CLOCK-BMAL1 induced transcription of BHLHE40/DEC1 and ATF4. Negatively regulates the formation of the TIMELESS-CRY1 complex by competing with TIMELESS for binding to CRY1.</text>
</comment>
<comment type="subunit">
    <text evidence="1 5 6 8 10 11 14 16 20 21 22 24 25 26 27 28 29 30 33 34 36 37 38 39 43 44 46 50">Homodimer. Component of the circadian core oscillator, which includes the CRY proteins, CLOCK or NPAS2, BMAL1 or BMAL2, CSNK1D and/or CSNK1E, TIMELESS, and the PER proteins (PubMed:11779462). Interacts with CLOCK-BMAL1 (off DNA). Interacts with BMAL2. Interacts directly with PER1 and PER3, and through a C-terminal domain, with CRY1 and CRY2. Interacts (via PAS 2 domain) with TIMELESS. Interacts with NFIL3. Different large complexes have been identified with different repressive functions. The core of PER complexes is composed of at least PER1, PER2, PER3, CRY1, CRY2, CSNK1D and/or CSNK1E. The large PER complex involved in the repression of transcriptional termination is composed of at least PER2, CDK9, DDX5, DHX9, NCBP1 and POLR2A (active). The large PER complex involved in the histone deacetylation is composed of at least HDAC1, PER2, SFPQ and SIN3A. The large PER complex involved in the histone methylation is composed of at least PER2, CBX3, TRIM28, SUV39H1 and/or SUV39H2; CBX3 mediates the formation of the complex. Interacts with SETX; the interaction inhibits termination of circadian target genes. Interacts with the nuclear receptors HNF4A, NR1D1, NR4A2, RORA, PPARA, PPARG and THRA; the interaction with at least PPARG is ligand dependent. Interacts with PML. Interacts (phosphorylated) with BTRC and FBXW11; the interactions trigger proteasomal degradation. Interacts with NONO and SFPQ. Interacts with CAVIN3. Interacts with MAGEL2. Interacts with MAP1LC3B (PubMed:29937374). Interacts with HNF4A (By similarity).</text>
</comment>
<comment type="interaction">
    <interactant intactId="EBI-1266779">
        <id>O54943</id>
    </interactant>
    <interactant intactId="EBI-644534">
        <id>Q9WTL8</id>
        <label>Bmal1</label>
    </interactant>
    <organismsDiffer>false</organismsDiffer>
    <experiments>9</experiments>
</comment>
<comment type="interaction">
    <interactant intactId="EBI-1266779">
        <id>O54943</id>
    </interactant>
    <interactant intactId="EBI-8094261">
        <id>Q91VJ2</id>
        <label>Cavin3</label>
    </interactant>
    <organismsDiffer>false</organismsDiffer>
    <experiments>4</experiments>
</comment>
<comment type="interaction">
    <interactant intactId="EBI-1266779">
        <id>O54943</id>
    </interactant>
    <interactant intactId="EBI-16101489">
        <id>Q3TQ03</id>
        <label>Ciart</label>
    </interactant>
    <organismsDiffer>false</organismsDiffer>
    <experiments>2</experiments>
</comment>
<comment type="interaction">
    <interactant intactId="EBI-1266779">
        <id>O54943</id>
    </interactant>
    <interactant intactId="EBI-79859">
        <id>O08785</id>
        <label>Clock</label>
    </interactant>
    <organismsDiffer>false</organismsDiffer>
    <experiments>10</experiments>
</comment>
<comment type="interaction">
    <interactant intactId="EBI-1266779">
        <id>O54943</id>
    </interactant>
    <interactant intactId="EBI-1266607">
        <id>P97784</id>
        <label>Cry1</label>
    </interactant>
    <organismsDiffer>false</organismsDiffer>
    <experiments>22</experiments>
</comment>
<comment type="interaction">
    <interactant intactId="EBI-1266779">
        <id>O54943</id>
    </interactant>
    <interactant intactId="EBI-1266619">
        <id>Q9R194</id>
        <label>Cry2</label>
    </interactant>
    <organismsDiffer>false</organismsDiffer>
    <experiments>8</experiments>
</comment>
<comment type="interaction">
    <interactant intactId="EBI-1266779">
        <id>O54943</id>
    </interactant>
    <interactant intactId="EBI-771709">
        <id>Q9JMK2</id>
        <label>Csnk1e</label>
    </interactant>
    <organismsDiffer>false</organismsDiffer>
    <experiments>4</experiments>
</comment>
<comment type="interaction">
    <interactant intactId="EBI-1266779">
        <id>O54943</id>
    </interactant>
    <interactant intactId="EBI-1266589">
        <id>Q8C4V4</id>
        <label>Fbxl3</label>
    </interactant>
    <organismsDiffer>false</organismsDiffer>
    <experiments>2</experiments>
</comment>
<comment type="interaction">
    <interactant intactId="EBI-1266779">
        <id>O54943</id>
    </interactant>
    <interactant intactId="EBI-1266764">
        <id>O35973</id>
        <label>Per1</label>
    </interactant>
    <organismsDiffer>false</organismsDiffer>
    <experiments>5</experiments>
</comment>
<comment type="interaction">
    <interactant intactId="EBI-1266779">
        <id>O54943</id>
    </interactant>
    <interactant intactId="EBI-1266779">
        <id>O54943</id>
        <label>Per2</label>
    </interactant>
    <organismsDiffer>false</organismsDiffer>
    <experiments>6</experiments>
</comment>
<comment type="interaction">
    <interactant intactId="EBI-1266779">
        <id>O54943</id>
    </interactant>
    <interactant intactId="EBI-3895605">
        <id>Q60953</id>
        <label>Pml</label>
    </interactant>
    <organismsDiffer>false</organismsDiffer>
    <experiments>4</experiments>
</comment>
<comment type="interaction">
    <interactant intactId="EBI-1266779">
        <id>O54943</id>
    </interactant>
    <interactant intactId="EBI-10265133">
        <id>Q8N365</id>
        <label>CIART</label>
    </interactant>
    <organismsDiffer>true</organismsDiffer>
    <experiments>4</experiments>
</comment>
<comment type="interaction">
    <interactant intactId="EBI-1266779">
        <id>O54943</id>
    </interactant>
    <interactant intactId="EBI-2811738">
        <id>P20393</id>
        <label>NR1D1</label>
    </interactant>
    <organismsDiffer>true</organismsDiffer>
    <experiments>2</experiments>
</comment>
<comment type="subcellular location">
    <subcellularLocation>
        <location evidence="10 33">Nucleus</location>
    </subcellularLocation>
    <subcellularLocation>
        <location evidence="10 33">Cytoplasm</location>
    </subcellularLocation>
    <subcellularLocation>
        <location evidence="34">Cytoplasm</location>
        <location evidence="34">Perinuclear region</location>
    </subcellularLocation>
    <text evidence="34">Nucleocytoplasmic shuttling is effected by interaction with other circadian core oscillator proteins and/or by phosphorylation. Translocate to the nucleus after phosphorylation by CSNK1D or CSNK1E. Also translocated to the nucleus by CRY1 or CRY2. PML regulates its nuclear localization (PubMed:22274616).</text>
</comment>
<comment type="tissue specificity">
    <text evidence="12 28 40 42 45 48 49">In the brain, high expression in SCN during the subjective day. Constitutive expression in the cornu ammonis and in the dentate gyrus of the hippocampus. Also expressed in the piriform cortex and the glomeruli of the olfactory bulb, and at a lower extent in the cerebral cortex. Not expressed in the pars tuberalis and the Purkinje neurons. Also expressed in adipose tissue (white and brown), heart, kidney, bladder, lumbar spinal cord, skeletal muscle, spleen, lung, pancreas and liver with highest levels in skeletal muscle and liver and lowest levels in spleen.</text>
</comment>
<comment type="developmental stage">
    <text evidence="28 48">Expressed in the SCN during late fetal and early neonatal life. Expression increases during adipogenesis.</text>
</comment>
<comment type="induction">
    <text evidence="12 19 25 40 45 48 49">Oscillates diurnally in several tissues, mainly in central nervous system and liver (at protein levels) but also in pancreas, bladder and lumbar spinal cord. Rhythmic levels are critical for the generation of circadian rhythms in central as well as peripheral clocks. Targeted degradation of PER and CRY proteins enables the reactivation of CLOCK-BMAL1, thus initiating a new circadian transcriptional cycle with an intrinsic period of 24 hours.</text>
</comment>
<comment type="PTM">
    <text evidence="20 47">Acetylated (PubMed:18662546, PubMed:30782483). Deacetylated by SIRT1, resulting in decreased protein stability (PubMed:18662546). Deacetylated by SIRT6, preventing its degradation by the proteasome, resulting in increased protein stability (PubMed:30782483).</text>
</comment>
<comment type="PTM">
    <text evidence="9 11 13 23 32">Phosphorylated by CSNK1E and CSNK1D. Phosphorylation results in PER2 protein degradation. May be dephosphorylated by PP1.</text>
</comment>
<comment type="PTM">
    <text evidence="10">Ubiquitinated, leading to its proteasomal degradation. Ubiquitination may be inhibited by CRY1.</text>
</comment>
<comment type="disruption phenotype">
    <text evidence="7 18 19 26 28 35 41 45">Animals show severely disrupted circadian behavior. During myocardial ischemia, they have larger infarct sizes with deficient lactate production. Mice show reduced muscle strength under stress conditions, show endothelial dysfunctions and have a mean arterial pressure significantly lower compared to wild types. They have elevated circulatory insulin levels associated with enhanced glucose-stimulated insulin secretion and impaired insulin clearance. Animals also have increased levels of liver glycogen and impaired hepatic gluconeogenesis. They display altered lipid metabolism with drastic reduction of total triacylglycerides and non-esterified fatty acids. Double knockouts for PER2 and PER1 show an abrupt loss of rhythmicity immediately upon transfer to exposure to constant darkness. Animals have largely affected the water intake (polydipsia) and urine volume (polyuria). Double knocknouts for PER2 and PER3 show the same phenotype as PER2 simple knockouts. Double knockout for NR1D1 and PER2 show a significantly shorter period length compared with wild type or single knockouts for both genes. 50% of double knockouts animals show a stable circadian throughout at least 5 weeks in constant darkness. The other 50% of animals lose their circadian rhythmicity when held in constant darkness for an average of 21 days. Animals have blunted steady-state levels of glycogen in the liver in spite of normal patterns of food consumption.</text>
</comment>
<sequence>MNGYVDFSPSPTSPTKEPGAPQPTQAVLQEDVDMSSGSSGNENCSTGRDSQGSDCDDNGKELRMLVESSNTHPSPDDAFRLMMTEAEHNPSTSGCSSEQSAKADAHKELIRTLKELKVHLPADKKAKGKASTLATLKYALRSVKQVKANEEYYQLLMSSESQPCSVDVPSYSMEQVEGITSEYIVKNADMFAVAVSLVSGKILYISNQVASIFHCKKDAFSDAKFVEFLAPHDVSVFHSYTTPYKLPPWSVCSGLDSFTQECMEEKSFFCRVSVGKHHENEIRYQPFRMTPYLVKVQEQQGAESQLCCLLLAERVHSGYEAPRIPPEKRIFTTTHTPNCLFQAVDERAVPLLGYLPQDLIETPVLVQLHPSDRPLMLAIHKKILQAGGQPFDYSPIRFRTRNGEYITLDTSWSSFINPWSRKISFIIGRHKVRVGPLNEDVFAAPPCPEEKTPHPSVQELTEQIHRLLMQPVPHSGSSGYGSLGSNGSHEHLMSQTSSSDSNGQEESHRRRSGIFKTSGKIQTKSHVSHESGGQKEASVAEMQSSPPAQVKAVTTIERDSSGASLPKASFPEELAYKNQPPCSYQQISCLDSVIRYLESCSEAATLKRKCEFPANIPSRKATVSPGLHSGEAARPSKVTSHTEVSAHLSSLTLPGKAESVVSLTSQCSYSSTIVHVGDKKPQPELETVEDMASGPESLDGAAGGLSQEKGPLQKLGLTKEVLAAHTQKEEQGFLQRFREVSRLSALQAHCQNYLQERSRAQASDRGLRNTSGLESSWKKTGKNRKLKSKRVKTRDSSESTGSGGPVSHRPPLMGLNATAWSPSDTSQSSCPSAPFPTAVPAYPLPVFQAPGIVSTPGTVVAPPAATHTGFTMPVVPMGTQPEFAVQPLPFAAPLAPVMAFMLPSYPFPPATPNLPQAFLPSQPHFPAHPTLASEITPASQAEFPSRTSTLRQPCACPVTPPAGTVALGRASPPLFQSRGSSPLQLNLLQLEEAPEGSTGAAGTLGTTGTAASGLDCTSGTSRDRQPKAPPTCNEPSDTQNSDAISTSSDLLNLLLGEDLCSATGSALSRSGASATSDSLGSSSLGFGTSQSGAGSSDTSHTSKYFGSIDSSENNHKAKMIPDTEESEQFIKYVLQDPIWLLMANTDDSIMMTYQLPSRDLQAVLKEDQEKLKLLQRSQPRFTEGQRRELREVHPWVHTGGLPTAIDVTGCVYCESEEKGNICLPYEEDSPSPGLCDTSEAKEEEGEQLTGPRIEAQT</sequence>
<feature type="chain" id="PRO_0000162631" description="Period circadian protein homolog 2">
    <location>
        <begin position="1"/>
        <end position="1257"/>
    </location>
</feature>
<feature type="domain" description="PAS 1" evidence="3">
    <location>
        <begin position="179"/>
        <end position="246"/>
    </location>
</feature>
<feature type="domain" description="PAS 2" evidence="3">
    <location>
        <begin position="319"/>
        <end position="385"/>
    </location>
</feature>
<feature type="domain" description="PAC">
    <location>
        <begin position="393"/>
        <end position="436"/>
    </location>
</feature>
<feature type="region of interest" description="Disordered" evidence="4">
    <location>
        <begin position="1"/>
        <end position="60"/>
    </location>
</feature>
<feature type="region of interest" description="Disordered" evidence="4">
    <location>
        <begin position="471"/>
        <end position="565"/>
    </location>
</feature>
<feature type="region of interest" description="Important for protein stability" evidence="2">
    <location>
        <begin position="478"/>
        <end position="482"/>
    </location>
</feature>
<feature type="region of interest" description="CSNK1E binding domain" evidence="11">
    <location>
        <begin position="510"/>
        <end position="709"/>
    </location>
</feature>
<feature type="region of interest" description="Disordered" evidence="4">
    <location>
        <begin position="617"/>
        <end position="638"/>
    </location>
</feature>
<feature type="region of interest" description="Disordered" evidence="4">
    <location>
        <begin position="757"/>
        <end position="832"/>
    </location>
</feature>
<feature type="region of interest" description="Interaction with PPARG" evidence="28">
    <location>
        <begin position="882"/>
        <end position="1067"/>
    </location>
</feature>
<feature type="region of interest" description="Disordered" evidence="4">
    <location>
        <begin position="994"/>
        <end position="1044"/>
    </location>
</feature>
<feature type="region of interest" description="Disordered" evidence="4">
    <location>
        <begin position="1070"/>
        <end position="1115"/>
    </location>
</feature>
<feature type="region of interest" description="CRY binding domain" evidence="2">
    <location>
        <begin position="1157"/>
        <end position="1257"/>
    </location>
</feature>
<feature type="region of interest" description="Disordered" evidence="4">
    <location>
        <begin position="1224"/>
        <end position="1257"/>
    </location>
</feature>
<feature type="short sequence motif" description="Nuclear export signal 1" evidence="10">
    <location>
        <begin position="109"/>
        <end position="118"/>
    </location>
</feature>
<feature type="short sequence motif" description="LXXLL">
    <location>
        <begin position="306"/>
        <end position="310"/>
    </location>
</feature>
<feature type="short sequence motif" description="Nuclear export signal 2" evidence="10">
    <location>
        <begin position="460"/>
        <end position="469"/>
    </location>
</feature>
<feature type="short sequence motif" description="Nuclear localization signal" evidence="10">
    <location>
        <begin position="778"/>
        <end position="794"/>
    </location>
</feature>
<feature type="short sequence motif" description="Nuclear export signal 3" evidence="10">
    <location>
        <begin position="983"/>
        <end position="990"/>
    </location>
</feature>
<feature type="short sequence motif" description="LXXLL">
    <location>
        <begin position="1051"/>
        <end position="1055"/>
    </location>
</feature>
<feature type="compositionally biased region" description="Polar residues" evidence="4">
    <location>
        <begin position="35"/>
        <end position="53"/>
    </location>
</feature>
<feature type="compositionally biased region" description="Polar residues" evidence="4">
    <location>
        <begin position="493"/>
        <end position="504"/>
    </location>
</feature>
<feature type="compositionally biased region" description="Basic residues" evidence="4">
    <location>
        <begin position="779"/>
        <end position="792"/>
    </location>
</feature>
<feature type="compositionally biased region" description="Low complexity" evidence="4">
    <location>
        <begin position="821"/>
        <end position="832"/>
    </location>
</feature>
<feature type="compositionally biased region" description="Low complexity" evidence="4">
    <location>
        <begin position="996"/>
        <end position="1014"/>
    </location>
</feature>
<feature type="compositionally biased region" description="Polar residues" evidence="4">
    <location>
        <begin position="1033"/>
        <end position="1044"/>
    </location>
</feature>
<feature type="compositionally biased region" description="Low complexity" evidence="4">
    <location>
        <begin position="1070"/>
        <end position="1092"/>
    </location>
</feature>
<feature type="compositionally biased region" description="Polar residues" evidence="4">
    <location>
        <begin position="1093"/>
        <end position="1111"/>
    </location>
</feature>
<feature type="modified residue" description="Phosphoserine" evidence="13">
    <location>
        <position position="525"/>
    </location>
</feature>
<feature type="modified residue" description="Phosphoserine" evidence="13">
    <location>
        <position position="528"/>
    </location>
</feature>
<feature type="modified residue" description="Phosphoserine" evidence="13">
    <location>
        <position position="531"/>
    </location>
</feature>
<feature type="modified residue" description="Phosphoserine" evidence="13">
    <location>
        <position position="538"/>
    </location>
</feature>
<feature type="modified residue" description="Phosphoserine" evidence="13">
    <location>
        <position position="544"/>
    </location>
</feature>
<feature type="modified residue" description="Phosphothreonine" evidence="13">
    <location>
        <position position="554"/>
    </location>
</feature>
<feature type="modified residue" description="Phosphoserine" evidence="1">
    <location>
        <position position="659"/>
    </location>
</feature>
<feature type="modified residue" description="Phosphoserine" evidence="52 53">
    <location>
        <position position="693"/>
    </location>
</feature>
<feature type="modified residue" description="Phosphoserine" evidence="52 53">
    <location>
        <position position="697"/>
    </location>
</feature>
<feature type="modified residue" description="Phosphoserine" evidence="13">
    <location>
        <position position="706"/>
    </location>
</feature>
<feature type="modified residue" description="Phosphoserine" evidence="13">
    <location>
        <position position="758"/>
    </location>
</feature>
<feature type="modified residue" description="Phosphoserine" evidence="13">
    <location>
        <position position="763"/>
    </location>
</feature>
<feature type="modified residue" description="Phosphothreonine" evidence="13">
    <location>
        <position position="858"/>
    </location>
</feature>
<feature type="modified residue" description="Phosphoserine" evidence="13">
    <location>
        <position position="939"/>
    </location>
</feature>
<feature type="modified residue" description="Phosphothreonine" evidence="13">
    <location>
        <position position="964"/>
    </location>
</feature>
<feature type="modified residue" description="Phosphoserine" evidence="13">
    <location>
        <position position="971"/>
    </location>
</feature>
<feature type="modified residue" description="Phosphoserine" evidence="13">
    <location>
        <position position="1126"/>
    </location>
</feature>
<feature type="mutagenesis site" description="Accumulates in the nucleus. Exlcusively nuclear; when associated with 464-A--A-467 and 985-A--A-990." evidence="10">
    <original>LKEL</original>
    <variation>AKEA</variation>
    <location>
        <begin position="113"/>
        <end position="116"/>
    </location>
</feature>
<feature type="mutagenesis site" description="Abolishes interaction with PPARA and NR1D1. No effect on interaction with CRY1. Abolishes interaction with PPARA and NR1D1 as well as reduces the amplitude of BMAL1 expression; when associated with 1052-E--A-1055." evidence="26">
    <original>LCCLL</original>
    <variation>ACCAA</variation>
    <location>
        <begin position="306"/>
        <end position="310"/>
    </location>
</feature>
<feature type="mutagenesis site" description="Abolishes interaction with NR1D1." evidence="26">
    <location>
        <begin position="306"/>
        <end position="310"/>
    </location>
</feature>
<feature type="mutagenesis site" description="Abolishes dimerization." evidence="22">
    <original>F</original>
    <variation>E</variation>
    <location>
        <position position="415"/>
    </location>
</feature>
<feature type="mutagenesis site" description="Abolishes dimerization." evidence="22">
    <original>W</original>
    <variation>E</variation>
    <location>
        <position position="419"/>
    </location>
</feature>
<feature type="mutagenesis site" description="Abolishes dimerization." evidence="22">
    <original>I</original>
    <variation>E</variation>
    <location>
        <position position="427"/>
    </location>
</feature>
<feature type="mutagenesis site" description="Accumulates in the nucleus. Exlcusively nuclear; when associated with 113-A--A-116 and 985-A--A-990." evidence="10">
    <original>IHRL</original>
    <variation>AHRA</variation>
    <location>
        <begin position="464"/>
        <end position="467"/>
    </location>
</feature>
<feature type="mutagenesis site" description="Slightly accumulates in the nucleus. Exlcusively nuclear; when associated with 464-A--A-467 and 985-A--A-990." evidence="10">
    <original>LNLLQL</original>
    <variation>ANAAQA</variation>
    <location>
        <begin position="985"/>
        <end position="990"/>
    </location>
</feature>
<feature type="mutagenesis site" description="No effect on interaction with PPARA. Abolishes interaction with PPARA and NR1D1 as well as reduces the amplitude of BMAL1 expression; when associated with 306-A--A-310." evidence="26">
    <original>NLLL</original>
    <variation>EAAA</variation>
    <location>
        <begin position="1052"/>
        <end position="1055"/>
    </location>
</feature>
<feature type="mutagenesis site" description="No effect on interaction with NR1D1." evidence="26">
    <location>
        <begin position="1052"/>
        <end position="1055"/>
    </location>
</feature>
<feature type="sequence conflict" description="In Ref. 2; AAC53592." evidence="51" ref="2">
    <original>P</original>
    <variation>S</variation>
    <location>
        <position position="445"/>
    </location>
</feature>
<feature type="sequence conflict" description="In Ref. 2; AAC53592." evidence="51" ref="2">
    <original>K</original>
    <variation>R</variation>
    <location>
        <position position="728"/>
    </location>
</feature>
<feature type="turn" evidence="54">
    <location>
        <begin position="173"/>
        <end position="176"/>
    </location>
</feature>
<feature type="strand" evidence="54">
    <location>
        <begin position="190"/>
        <end position="195"/>
    </location>
</feature>
<feature type="turn" evidence="54">
    <location>
        <begin position="197"/>
        <end position="199"/>
    </location>
</feature>
<feature type="strand" evidence="54">
    <location>
        <begin position="201"/>
        <end position="205"/>
    </location>
</feature>
<feature type="turn" evidence="54">
    <location>
        <begin position="207"/>
        <end position="212"/>
    </location>
</feature>
<feature type="helix" evidence="54">
    <location>
        <begin position="225"/>
        <end position="228"/>
    </location>
</feature>
<feature type="turn" evidence="54">
    <location>
        <begin position="231"/>
        <end position="233"/>
    </location>
</feature>
<feature type="helix" evidence="54">
    <location>
        <begin position="234"/>
        <end position="240"/>
    </location>
</feature>
<feature type="strand" evidence="54">
    <location>
        <begin position="268"/>
        <end position="272"/>
    </location>
</feature>
<feature type="strand" evidence="54">
    <location>
        <begin position="285"/>
        <end position="295"/>
    </location>
</feature>
<feature type="strand" evidence="54">
    <location>
        <begin position="306"/>
        <end position="314"/>
    </location>
</feature>
<feature type="strand" evidence="54">
    <location>
        <begin position="320"/>
        <end position="322"/>
    </location>
</feature>
<feature type="helix" evidence="54">
    <location>
        <begin position="326"/>
        <end position="328"/>
    </location>
</feature>
<feature type="strand" evidence="54">
    <location>
        <begin position="330"/>
        <end position="335"/>
    </location>
</feature>
<feature type="strand" evidence="54">
    <location>
        <begin position="340"/>
        <end position="344"/>
    </location>
</feature>
<feature type="helix" evidence="54">
    <location>
        <begin position="348"/>
        <end position="352"/>
    </location>
</feature>
<feature type="helix" evidence="54">
    <location>
        <begin position="356"/>
        <end position="359"/>
    </location>
</feature>
<feature type="helix" evidence="54">
    <location>
        <begin position="364"/>
        <end position="367"/>
    </location>
</feature>
<feature type="helix" evidence="54">
    <location>
        <begin position="373"/>
        <end position="385"/>
    </location>
</feature>
<feature type="turn" evidence="54">
    <location>
        <begin position="386"/>
        <end position="388"/>
    </location>
</feature>
<feature type="strand" evidence="54">
    <location>
        <begin position="391"/>
        <end position="399"/>
    </location>
</feature>
<feature type="strand" evidence="54">
    <location>
        <begin position="405"/>
        <end position="416"/>
    </location>
</feature>
<feature type="turn" evidence="54">
    <location>
        <begin position="418"/>
        <end position="420"/>
    </location>
</feature>
<feature type="strand" evidence="54">
    <location>
        <begin position="423"/>
        <end position="434"/>
    </location>
</feature>
<feature type="strand" evidence="54">
    <location>
        <begin position="437"/>
        <end position="439"/>
    </location>
</feature>
<feature type="helix" evidence="54">
    <location>
        <begin position="455"/>
        <end position="467"/>
    </location>
</feature>
<feature type="strand" evidence="55">
    <location>
        <begin position="1132"/>
        <end position="1135"/>
    </location>
</feature>
<feature type="helix" evidence="55">
    <location>
        <begin position="1138"/>
        <end position="1141"/>
    </location>
</feature>
<feature type="helix" evidence="55">
    <location>
        <begin position="1147"/>
        <end position="1152"/>
    </location>
</feature>
<feature type="helix" evidence="55">
    <location>
        <begin position="1160"/>
        <end position="1174"/>
    </location>
</feature>
<feature type="helix" evidence="55">
    <location>
        <begin position="1175"/>
        <end position="1177"/>
    </location>
</feature>
<feature type="helix" evidence="55">
    <location>
        <begin position="1183"/>
        <end position="1189"/>
    </location>
</feature>
<feature type="turn" evidence="55">
    <location>
        <begin position="1190"/>
        <end position="1192"/>
    </location>
</feature>
<feature type="helix" evidence="55">
    <location>
        <begin position="1195"/>
        <end position="1198"/>
    </location>
</feature>
<feature type="helix" evidence="55">
    <location>
        <begin position="1203"/>
        <end position="1205"/>
    </location>
</feature>
<feature type="strand" evidence="55">
    <location>
        <begin position="1207"/>
        <end position="1209"/>
    </location>
</feature>
<feature type="turn" evidence="55">
    <location>
        <begin position="1211"/>
        <end position="1213"/>
    </location>
</feature>
<organism>
    <name type="scientific">Mus musculus</name>
    <name type="common">Mouse</name>
    <dbReference type="NCBI Taxonomy" id="10090"/>
    <lineage>
        <taxon>Eukaryota</taxon>
        <taxon>Metazoa</taxon>
        <taxon>Chordata</taxon>
        <taxon>Craniata</taxon>
        <taxon>Vertebrata</taxon>
        <taxon>Euteleostomi</taxon>
        <taxon>Mammalia</taxon>
        <taxon>Eutheria</taxon>
        <taxon>Euarchontoglires</taxon>
        <taxon>Glires</taxon>
        <taxon>Rodentia</taxon>
        <taxon>Myomorpha</taxon>
        <taxon>Muroidea</taxon>
        <taxon>Muridae</taxon>
        <taxon>Murinae</taxon>
        <taxon>Mus</taxon>
        <taxon>Mus</taxon>
    </lineage>
</organism>
<evidence type="ECO:0000250" key="1">
    <source>
        <dbReference type="UniProtKB" id="O15055"/>
    </source>
</evidence>
<evidence type="ECO:0000250" key="2">
    <source>
        <dbReference type="UniProtKB" id="Q9Z301"/>
    </source>
</evidence>
<evidence type="ECO:0000255" key="3">
    <source>
        <dbReference type="PROSITE-ProRule" id="PRU00140"/>
    </source>
</evidence>
<evidence type="ECO:0000256" key="4">
    <source>
        <dbReference type="SAM" id="MobiDB-lite"/>
    </source>
</evidence>
<evidence type="ECO:0000269" key="5">
    <source>
    </source>
</evidence>
<evidence type="ECO:0000269" key="6">
    <source>
    </source>
</evidence>
<evidence type="ECO:0000269" key="7">
    <source>
    </source>
</evidence>
<evidence type="ECO:0000269" key="8">
    <source>
    </source>
</evidence>
<evidence type="ECO:0000269" key="9">
    <source>
    </source>
</evidence>
<evidence type="ECO:0000269" key="10">
    <source>
    </source>
</evidence>
<evidence type="ECO:0000269" key="11">
    <source>
    </source>
</evidence>
<evidence type="ECO:0000269" key="12">
    <source>
    </source>
</evidence>
<evidence type="ECO:0000269" key="13">
    <source>
    </source>
</evidence>
<evidence type="ECO:0000269" key="14">
    <source>
    </source>
</evidence>
<evidence type="ECO:0000269" key="15">
    <source>
    </source>
</evidence>
<evidence type="ECO:0000269" key="16">
    <source>
    </source>
</evidence>
<evidence type="ECO:0000269" key="17">
    <source>
    </source>
</evidence>
<evidence type="ECO:0000269" key="18">
    <source>
    </source>
</evidence>
<evidence type="ECO:0000269" key="19">
    <source>
    </source>
</evidence>
<evidence type="ECO:0000269" key="20">
    <source>
    </source>
</evidence>
<evidence type="ECO:0000269" key="21">
    <source>
    </source>
</evidence>
<evidence type="ECO:0000269" key="22">
    <source>
    </source>
</evidence>
<evidence type="ECO:0000269" key="23">
    <source>
    </source>
</evidence>
<evidence type="ECO:0000269" key="24">
    <source>
    </source>
</evidence>
<evidence type="ECO:0000269" key="25">
    <source>
    </source>
</evidence>
<evidence type="ECO:0000269" key="26">
    <source>
    </source>
</evidence>
<evidence type="ECO:0000269" key="27">
    <source>
    </source>
</evidence>
<evidence type="ECO:0000269" key="28">
    <source>
    </source>
</evidence>
<evidence type="ECO:0000269" key="29">
    <source>
    </source>
</evidence>
<evidence type="ECO:0000269" key="30">
    <source>
    </source>
</evidence>
<evidence type="ECO:0000269" key="31">
    <source>
    </source>
</evidence>
<evidence type="ECO:0000269" key="32">
    <source>
    </source>
</evidence>
<evidence type="ECO:0000269" key="33">
    <source>
    </source>
</evidence>
<evidence type="ECO:0000269" key="34">
    <source>
    </source>
</evidence>
<evidence type="ECO:0000269" key="35">
    <source>
    </source>
</evidence>
<evidence type="ECO:0000269" key="36">
    <source>
    </source>
</evidence>
<evidence type="ECO:0000269" key="37">
    <source>
    </source>
</evidence>
<evidence type="ECO:0000269" key="38">
    <source>
    </source>
</evidence>
<evidence type="ECO:0000269" key="39">
    <source>
    </source>
</evidence>
<evidence type="ECO:0000269" key="40">
    <source>
    </source>
</evidence>
<evidence type="ECO:0000269" key="41">
    <source>
    </source>
</evidence>
<evidence type="ECO:0000269" key="42">
    <source>
    </source>
</evidence>
<evidence type="ECO:0000269" key="43">
    <source>
    </source>
</evidence>
<evidence type="ECO:0000269" key="44">
    <source>
    </source>
</evidence>
<evidence type="ECO:0000269" key="45">
    <source>
    </source>
</evidence>
<evidence type="ECO:0000269" key="46">
    <source>
    </source>
</evidence>
<evidence type="ECO:0000269" key="47">
    <source>
    </source>
</evidence>
<evidence type="ECO:0000269" key="48">
    <source>
    </source>
</evidence>
<evidence type="ECO:0000269" key="49">
    <source>
    </source>
</evidence>
<evidence type="ECO:0000269" key="50">
    <source>
    </source>
</evidence>
<evidence type="ECO:0000305" key="51"/>
<evidence type="ECO:0007744" key="52">
    <source>
    </source>
</evidence>
<evidence type="ECO:0007744" key="53">
    <source>
    </source>
</evidence>
<evidence type="ECO:0007829" key="54">
    <source>
        <dbReference type="PDB" id="3GDI"/>
    </source>
</evidence>
<evidence type="ECO:0007829" key="55">
    <source>
        <dbReference type="PDB" id="4CT0"/>
    </source>
</evidence>
<name>PER2_MOUSE</name>
<reference key="1">
    <citation type="journal article" date="1997" name="Cell">
        <title>A differential response of two putative mammalian circadian regulators, mper1 and mper2, to light.</title>
        <authorList>
            <person name="Albrecht U."/>
            <person name="Sun Z.S."/>
            <person name="Eichele G."/>
            <person name="Lee C.C."/>
        </authorList>
    </citation>
    <scope>NUCLEOTIDE SEQUENCE [MRNA]</scope>
    <scope>TISSUE SPECIFICITY</scope>
    <scope>INDUCTION</scope>
    <source>
        <tissue>Brain</tissue>
    </source>
</reference>
<reference key="2">
    <citation type="journal article" date="1997" name="Neuron">
        <title>Two period homologs: circadian expression and photic regulation in the suprachiasmatic nuclei.</title>
        <authorList>
            <person name="Shearman L.P."/>
            <person name="Zylka M.J."/>
            <person name="Weaver D.R."/>
            <person name="Kolakowski L.F. Jr."/>
            <person name="Reppert S.M."/>
        </authorList>
    </citation>
    <scope>NUCLEOTIDE SEQUENCE [MRNA]</scope>
    <scope>TISSUE SPECIFICITY</scope>
    <scope>INDUCTION</scope>
    <scope>DEVELOPMENTAL STAGE</scope>
    <source>
        <tissue>Brain</tissue>
    </source>
</reference>
<reference key="3">
    <citation type="submission" date="1998-06" db="EMBL/GenBank/DDBJ databases">
        <authorList>
            <person name="Zylka M.J."/>
            <person name="Reppert S.M."/>
        </authorList>
    </citation>
    <scope>SEQUENCE REVISION TO 172 AND 501</scope>
</reference>
<reference key="4">
    <citation type="journal article" date="1998" name="Neuron">
        <title>Mammalian circadian autoregulatory loop: a timeless ortholog and mPer1 interact and negatively regulate CLOCK-ARTNL/BMAL1-induced transcription.</title>
        <authorList>
            <person name="Sangoram A.M."/>
            <person name="Saez L."/>
            <person name="Antoch M.P."/>
            <person name="Gekakis N."/>
            <person name="Staknis D."/>
            <person name="Whiteley A."/>
            <person name="Fruechte E.M."/>
            <person name="Vitaterna M.H."/>
            <person name="Shimomura K."/>
            <person name="King D.P."/>
            <person name="Young M.W."/>
            <person name="Weitz C.J."/>
            <person name="Takahashi J.S."/>
        </authorList>
    </citation>
    <scope>INTERACTION WITH TIMELESS</scope>
</reference>
<reference key="5">
    <citation type="journal article" date="1999" name="Cell">
        <title>mCRY1 and mCRY2 are essential components of the negative limb of the circadian clock feedback loop.</title>
        <authorList>
            <person name="Kume K."/>
            <person name="Zylka M.J."/>
            <person name="Sriram S."/>
            <person name="Shearman L.P."/>
            <person name="Weaver D.R."/>
            <person name="Jin X."/>
            <person name="Maywood E.S."/>
            <person name="Hastings M.H."/>
            <person name="Reppert S.M."/>
        </authorList>
    </citation>
    <scope>FUNCTION</scope>
    <scope>INTERACTION WITH PER3; CRY1 AND CRY2</scope>
    <scope>SUBCELLULAR LOCATION</scope>
</reference>
<reference key="6">
    <citation type="journal article" date="2000" name="Mol. Cell. Biol.">
        <title>Nuclear entry of the circadian regulator mPER1 is controlled by mammalian casein kinase I epsilon.</title>
        <authorList>
            <person name="Vielhaber E."/>
            <person name="Eide E."/>
            <person name="Rivers A."/>
            <person name="Gao Z.-H."/>
            <person name="Virshup D.M."/>
        </authorList>
    </citation>
    <scope>INTERACTION WITH PER1</scope>
    <scope>SUBCELLULAR LOCATION</scope>
</reference>
<reference key="7">
    <citation type="journal article" date="2001" name="Cell">
        <title>Posttranslational mechanisms regulate the mammalian circadian clock.</title>
        <authorList>
            <person name="Lee C."/>
            <person name="Etchegaray J.-P."/>
            <person name="Cagampang F.R.A."/>
            <person name="Loudon A.S.I."/>
            <person name="Reppert S.M."/>
        </authorList>
    </citation>
    <scope>IDENTIFICATION IN A COMPLEX WITH CLOCK; PER1; PER2; CRY1; CRY2; CSNK1D AND CSNK1E</scope>
    <scope>PHOSPHORYLATION</scope>
    <scope>SUBCELLULAR LOCATION</scope>
    <scope>INDUCTION</scope>
</reference>
<reference key="8">
    <citation type="journal article" date="2001" name="J. Biol. Chem.">
        <title>Nuclear export of mammalian PERIOD proteins.</title>
        <authorList>
            <person name="Vielhaber E.L."/>
            <person name="Duricka D."/>
            <person name="Ullman K.S."/>
            <person name="Virshup D.M."/>
        </authorList>
    </citation>
    <scope>SUBCELLULAR LOCATION</scope>
    <scope>NUCLEAR EXPORT SIGNAL</scope>
</reference>
<reference key="9">
    <citation type="journal article" date="2001" name="Neuron">
        <title>Differential functions of mPer1, mPer2, and mPer3 in the SCN circadian clock.</title>
        <authorList>
            <person name="Bae K."/>
            <person name="Jin X."/>
            <person name="Maywood E.S."/>
            <person name="Hastings M.H."/>
            <person name="Reppert S.M."/>
            <person name="Weaver D.R."/>
        </authorList>
    </citation>
    <scope>FUNCTION AS TRANSCRIPTIONAL REPRESSOR</scope>
    <scope>DISRUPTION PHENOTYPE</scope>
</reference>
<reference key="10">
    <citation type="journal article" date="2002" name="EMBO J.">
        <title>Nucleocytoplasmic shuttling and mCRY-dependent inhibition of ubiquitylation of the mPER2 clock protein.</title>
        <authorList>
            <person name="Yagita K."/>
            <person name="Tamanini F."/>
            <person name="Yasuda M."/>
            <person name="Hoeijmakers J.H."/>
            <person name="van der Horst G.T."/>
            <person name="Okamura H."/>
        </authorList>
    </citation>
    <scope>INTERACTION WITH CRY1</scope>
    <scope>SUBCELLULAR LOCATION</scope>
    <scope>NUCLEAR EXPORT SIGNAL</scope>
    <scope>NUCLEAR LOCALIZATION SIGNAL</scope>
    <scope>UBIQUITINATION</scope>
    <scope>MUTAGENESIS OF 113-LEU--LEU-116; 464-ILE--LEU-467 AND 985-LEU--LEU-990</scope>
</reference>
<reference key="11">
    <citation type="journal article" date="2002" name="Mol. Cell. Biol.">
        <title>Control of intracellular dynamics of mammalian period proteins by casein kinase I epsilon (CKIepsilon) and CKIdelta in cultured cells.</title>
        <authorList>
            <person name="Akashi M."/>
            <person name="Tsuchiya Y."/>
            <person name="Yoshino T."/>
            <person name="Nishida E."/>
        </authorList>
    </citation>
    <scope>PHOSPHORYLATION BY CSNK1D AND CKSN1E</scope>
</reference>
<reference key="12">
    <citation type="journal article" date="2004" name="Mol. Cell. Biol.">
        <title>Direct association between mouse PERIOD and CKIepsilon is critical for a functioning circadian clock.</title>
        <authorList>
            <person name="Lee C."/>
            <person name="Weaver D.R."/>
            <person name="Reppert S.M."/>
        </authorList>
    </citation>
    <scope>INTERACTION WITH PER1; PER3; CRY1 AND CRY2</scope>
    <scope>PHOSPHORYLATION BY CSNK1E</scope>
</reference>
<reference key="13">
    <citation type="journal article" date="2005" name="Anal. Chem.">
        <title>Mapping of phosphorylation sites by a multi-protease approach with specific phosphopeptide enrichment and NanoLC-MS/MS analysis.</title>
        <authorList>
            <person name="Schlosser A."/>
            <person name="Vanselow J.T."/>
            <person name="Kramer A."/>
        </authorList>
    </citation>
    <scope>PHOSPHORYLATION AT SER-525; SER-528; SER-531; SER-538; SER-544; THR-554; SER-706; SER-758; SER-763; THR-858; SER-939; THR-964; SER-971 AND SER-1126</scope>
</reference>
<reference key="14">
    <citation type="journal article" date="2005" name="Science">
        <title>PERIOD1-associated proteins modulate the negative limb of the mammalian circadian oscillator.</title>
        <authorList>
            <person name="Brown S.A."/>
            <person name="Ripperger J."/>
            <person name="Kadener S."/>
            <person name="Fleury-Olela F."/>
            <person name="Vilbois F."/>
            <person name="Rosbash M."/>
            <person name="Schibler U."/>
        </authorList>
    </citation>
    <scope>TISSUE SPECIFICITY</scope>
    <scope>INDUCTION BY CIRCADIAN RHYTHMS</scope>
    <scope>SUBCELLULAR LOCATION</scope>
</reference>
<reference key="15">
    <citation type="journal article" date="2006" name="J. Biol. Chem.">
        <title>Differential sorting of the vesicular glutamate transporter 1 into a defined vesicular pool is regulated by light signaling involving the clock gene Period2.</title>
        <authorList>
            <person name="Yelamanchili S.V."/>
            <person name="Pendyala G."/>
            <person name="Brunk I."/>
            <person name="Darna M."/>
            <person name="Albrecht U."/>
            <person name="Ahnert-Hilger G."/>
        </authorList>
    </citation>
    <scope>FUNCTION IN GLUTAMATE UPTAKE</scope>
</reference>
<reference key="16">
    <citation type="journal article" date="2006" name="J. Biol. Chem.">
        <title>The polycomb group protein EZH2 is required for mammalian circadian clock function.</title>
        <authorList>
            <person name="Etchegaray J.P."/>
            <person name="Yang X."/>
            <person name="DeBruyne J.P."/>
            <person name="Peters A.H."/>
            <person name="Weaver D.R."/>
            <person name="Jenuwein T."/>
            <person name="Reppert S.M."/>
        </authorList>
    </citation>
    <scope>INTERACTION WITH CLOCK AND BMAL1</scope>
</reference>
<reference key="17">
    <citation type="journal article" date="2006" name="Mol. Cell. Biol.">
        <title>Functional evolution of the photolyase/cryptochrome protein family: importance of the C terminus of mammalian CRY1 for circadian core oscillator performance.</title>
        <authorList>
            <person name="Chaves I."/>
            <person name="Yagita K."/>
            <person name="Barnhoorn S."/>
            <person name="Okamura H."/>
            <person name="van der Horst G.T.J."/>
            <person name="Tamanini F."/>
        </authorList>
    </citation>
    <scope>INTERACTION WITH CRY1 AND CRY2</scope>
</reference>
<reference key="18">
    <citation type="journal article" date="2007" name="Circulation">
        <title>Mutation of the circadian clock gene Per2 alters vascular endothelial function.</title>
        <authorList>
            <person name="Viswambharan H."/>
            <person name="Carvas J.M."/>
            <person name="Antic V."/>
            <person name="Marecic A."/>
            <person name="Jud C."/>
            <person name="Zaugg C.E."/>
            <person name="Ming X.F."/>
            <person name="Montani J.P."/>
            <person name="Albrecht U."/>
            <person name="Yang Z."/>
        </authorList>
    </citation>
    <scope>FUNCTION IN MAINTENANCE OF CARDIOVASCULAR FUNCTIONS</scope>
    <scope>DISRUPTION PHENOTYPE</scope>
</reference>
<reference key="19">
    <citation type="journal article" date="2007" name="Cold Spring Harb. Symp. Quant. Biol.">
        <title>The multiple facets of Per2.</title>
        <authorList>
            <person name="Albrecht U."/>
            <person name="Bordon A."/>
            <person name="Schmutz I."/>
            <person name="Ripperger J."/>
        </authorList>
    </citation>
    <scope>REVIEW OF FUNCTIONS</scope>
    <scope>INDUCTION</scope>
    <scope>DISRUPTION PHENOTYPE</scope>
</reference>
<reference key="20">
    <citation type="journal article" date="2007" name="Biochem. Biophys. Res. Commun.">
        <title>The negative transcription factor E4BP4 is associated with circadian clock protein PERIOD2.</title>
        <authorList>
            <person name="Ohno T."/>
            <person name="Onishi Y."/>
            <person name="Ishida N."/>
        </authorList>
    </citation>
    <scope>INTERACTION WITH NFIL3</scope>
</reference>
<reference key="21">
    <citation type="journal article" date="2007" name="Nat. Cell Biol.">
        <title>CIPC is a mammalian circadian clock protein without invertebrate homologues.</title>
        <authorList>
            <person name="Zhao W.N."/>
            <person name="Malinin N."/>
            <person name="Yang F.C."/>
            <person name="Staknis D."/>
            <person name="Gekakis N."/>
            <person name="Maier B."/>
            <person name="Reischl S."/>
            <person name="Kramer A."/>
            <person name="Weitz C.J."/>
        </authorList>
    </citation>
    <scope>FUNCTION</scope>
</reference>
<reference key="22">
    <citation type="journal article" date="2007" name="Proc. Natl. Acad. Sci. U.S.A.">
        <title>Large-scale phosphorylation analysis of mouse liver.</title>
        <authorList>
            <person name="Villen J."/>
            <person name="Beausoleil S.A."/>
            <person name="Gerber S.A."/>
            <person name="Gygi S.P."/>
        </authorList>
    </citation>
    <scope>PHOSPHORYLATION [LARGE SCALE ANALYSIS] AT SER-693 AND SER-697</scope>
    <scope>IDENTIFICATION BY MASS SPECTROMETRY [LARGE SCALE ANALYSIS]</scope>
    <source>
        <tissue>Liver</tissue>
    </source>
</reference>
<reference key="23">
    <citation type="journal article" date="2008" name="Cell">
        <title>SIRT1 regulates circadian clock gene expression through PER2 deacetylation.</title>
        <authorList>
            <person name="Asher G."/>
            <person name="Gatfield D."/>
            <person name="Stratmann M."/>
            <person name="Reinke H."/>
            <person name="Dibner C."/>
            <person name="Kreppel F."/>
            <person name="Mostoslavsky R."/>
            <person name="Alt F.W."/>
            <person name="Schibler U."/>
        </authorList>
    </citation>
    <scope>ACETYLATION</scope>
    <scope>DEACETYLATION BY SIRT1</scope>
</reference>
<reference key="24">
    <citation type="journal article" date="2008" name="J. Biochem.">
        <title>The role of {beta}-TrCP1 and {beta}-TrCP2 in circadian rhythm generation by mediating degradation of clock protein PER2.</title>
        <authorList>
            <person name="Ohsaki K."/>
            <person name="Oishi K."/>
            <person name="Kozono Y."/>
            <person name="Nakayama K."/>
            <person name="Nakayama K.I."/>
            <person name="Ishida N."/>
        </authorList>
    </citation>
    <scope>INTERACTION WITH BTRC AND FBXW11</scope>
</reference>
<reference key="25">
    <citation type="journal article" date="2009" name="J. Biol. Chem.">
        <title>Preferential inhibition of BMAL2-CLOCK activity by PER2 reemphasizes its negative role and a positive role of BMAL2 in the circadian transcription.</title>
        <authorList>
            <person name="Sasaki M."/>
            <person name="Yoshitane H."/>
            <person name="Du N.H."/>
            <person name="Okano T."/>
            <person name="Fukada Y."/>
        </authorList>
    </citation>
    <scope>FUNCTION AS TRANSCRIPTIONAL REPRESSOR</scope>
    <scope>INTERACTION WITH BMAL2</scope>
</reference>
<reference key="26">
    <citation type="journal article" date="2009" name="Mol. Cell">
        <title>Rhythmic PER abundance defines a critical nodal point for negative feedback within the circadian clock mechanism.</title>
        <authorList>
            <person name="Chen R."/>
            <person name="Schirmer A."/>
            <person name="Lee Y."/>
            <person name="Lee H."/>
            <person name="Kumar V."/>
            <person name="Yoo S.H."/>
            <person name="Takahashi J.S."/>
            <person name="Lee C."/>
        </authorList>
    </citation>
    <scope>FUNCTION IN CIRCADIAN CLOCK</scope>
    <scope>INTERACTION WITH BMAL1 AND CLOCK</scope>
    <scope>INDUCTION</scope>
</reference>
<reference key="27">
    <citation type="journal article" date="2009" name="Mol. Cell. Biol.">
        <title>Casein kinase 1 delta regulates the pace of the mammalian circadian clock.</title>
        <authorList>
            <person name="Etchegaray J.P."/>
            <person name="Machida K.K."/>
            <person name="Noton E."/>
            <person name="Constance C.M."/>
            <person name="Dallmann R."/>
            <person name="Di Napoli M.N."/>
            <person name="DeBruyne J.P."/>
            <person name="Lambert C.M."/>
            <person name="Yu E.A."/>
            <person name="Reppert S.M."/>
            <person name="Weaver D.R."/>
        </authorList>
    </citation>
    <scope>SUBCELLULAR LOCATION</scope>
    <scope>PHOSPHORYLATION BY CSNK1D AND CSNK1E</scope>
</reference>
<reference key="28">
    <citation type="journal article" date="2010" name="BMC Mol. Biol.">
        <title>Identification of two amino acids in the C-terminal domain of mouse CRY2 essential for PER2 interaction.</title>
        <authorList>
            <person name="Ozber N."/>
            <person name="Baris I."/>
            <person name="Tatlici G."/>
            <person name="Gur I."/>
            <person name="Kilinc S."/>
            <person name="Unal E.B."/>
            <person name="Kavakli I.H."/>
        </authorList>
    </citation>
    <scope>INTERACTION WITH CRY2</scope>
</reference>
<reference key="29">
    <citation type="journal article" date="2010" name="Cell">
        <title>A tissue-specific atlas of mouse protein phosphorylation and expression.</title>
        <authorList>
            <person name="Huttlin E.L."/>
            <person name="Jedrychowski M.P."/>
            <person name="Elias J.E."/>
            <person name="Goswami T."/>
            <person name="Rad R."/>
            <person name="Beausoleil S.A."/>
            <person name="Villen J."/>
            <person name="Haas W."/>
            <person name="Sowa M.E."/>
            <person name="Gygi S.P."/>
        </authorList>
    </citation>
    <scope>PHOSPHORYLATION [LARGE SCALE ANALYSIS] AT SER-693 AND SER-697</scope>
    <scope>IDENTIFICATION BY MASS SPECTROMETRY [LARGE SCALE ANALYSIS]</scope>
    <source>
        <tissue>Kidney</tissue>
    </source>
</reference>
<reference key="30">
    <citation type="journal article" date="2010" name="Cell Metab.">
        <title>PER2 controls lipid metabolism by direct regulation of PPARgamma.</title>
        <authorList>
            <person name="Grimaldi B."/>
            <person name="Bellet M.M."/>
            <person name="Katada S."/>
            <person name="Astarita G."/>
            <person name="Hirayama J."/>
            <person name="Amin R.H."/>
            <person name="Granneman J.G."/>
            <person name="Piomelli D."/>
            <person name="Leff T."/>
            <person name="Sassone-Corsi P."/>
        </authorList>
    </citation>
    <scope>FUNCTION IN ADIPOGENESIS</scope>
    <scope>INTERACTION WITH PPARG</scope>
    <scope>DISRUPTION PHENOTYPE</scope>
    <scope>TISSUE SPECIFICITY</scope>
    <scope>DEVELOPMENTAL STAGE</scope>
</reference>
<reference key="31">
    <citation type="journal article" date="2010" name="Genes Dev.">
        <title>The mammalian clock component PERIOD2 coordinates circadian output by interaction with nuclear receptors.</title>
        <authorList>
            <person name="Schmutz I."/>
            <person name="Ripperger J.A."/>
            <person name="Baeriswyl-Aebischer S."/>
            <person name="Albrecht U."/>
        </authorList>
    </citation>
    <scope>FUNCTION AS COACTIVATOR</scope>
    <scope>INTERACTION WITH BMAL1; CRY1; HNF4A; NR1D1; NR4A2; RORA; PPARA AND THRA</scope>
    <scope>DISRUPTION PHENOTYPE</scope>
    <scope>MUTAGENESIS OF 306-LEU--LEU-310 AND 1052-ASN--LEU-1055</scope>
</reference>
<reference key="32">
    <citation type="journal article" date="2011" name="J. Biol. Chem.">
        <title>Biochemical analysis of the canonical model for the mammalian circadian clock.</title>
        <authorList>
            <person name="Ye R."/>
            <person name="Selby C.P."/>
            <person name="Ozturk N."/>
            <person name="Annayev Y."/>
            <person name="Sancar A."/>
        </authorList>
    </citation>
    <scope>INTERACTION WITH BMAL1; CLOCK AND CRY1</scope>
</reference>
<reference key="33">
    <citation type="journal article" date="2011" name="J. Biol. Chem.">
        <title>cAMP-response element (CRE)-mediated transcription by activating transcription factor-4 (ATF4) is essential for circadian expression of the Period2 gene.</title>
        <authorList>
            <person name="Koyanagi S."/>
            <person name="Hamdan A.M."/>
            <person name="Horiguchi M."/>
            <person name="Kusunose N."/>
            <person name="Okamoto A."/>
            <person name="Matsunaga N."/>
            <person name="Ohdo S."/>
        </authorList>
    </citation>
    <scope>FUNCTION</scope>
</reference>
<reference key="34">
    <citation type="journal article" date="2011" name="J. Circadian. Rhythms.">
        <title>Magel2, a Prader-Willi syndrome candidate gene, modulates the activities of circadian rhythm proteins in cultured cells.</title>
        <authorList>
            <person name="Devos J."/>
            <person name="Weselake S.V."/>
            <person name="Wevrick R."/>
        </authorList>
    </citation>
    <scope>INTERACTION WITH MAGEL2</scope>
    <scope>SUBCELLULAR LOCATION</scope>
</reference>
<reference key="35">
    <citation type="journal article" date="2011" name="PLoS ONE">
        <title>Protein phosphatase 1 (PP1) is a post-translational regulator of the mammalian circadian clock.</title>
        <authorList>
            <person name="Schmutz I."/>
            <person name="Wendt S."/>
            <person name="Schnell A."/>
            <person name="Kramer A."/>
            <person name="Mansuy I.M."/>
            <person name="Albrecht U."/>
        </authorList>
    </citation>
    <scope>SUBCELLULAR LOCATION</scope>
    <scope>DEPHOSPHORYLATION</scope>
</reference>
<reference key="36">
    <citation type="journal article" date="2011" name="Proc. Natl. Acad. Sci. U.S.A.">
        <title>The period of the circadian oscillator is primarily determined by the balance between casein kinase 1 and protein phosphatase 1.</title>
        <authorList>
            <person name="Lee H.M."/>
            <person name="Chen R."/>
            <person name="Kim H."/>
            <person name="Etchegaray J.P."/>
            <person name="Weaver D.R."/>
            <person name="Lee C."/>
        </authorList>
    </citation>
    <scope>FUNCTION IN CIRCADIAN CLOCK</scope>
    <scope>PHOSPHORYLATION BY CSNK1D AND CKSN1E</scope>
    <scope>SUBCELLULAR LOCATION</scope>
</reference>
<reference key="37">
    <citation type="journal article" date="2011" name="Science">
        <title>A molecular mechanism for circadian clock negative feedback.</title>
        <authorList>
            <person name="Duong H.A."/>
            <person name="Robles M.S."/>
            <person name="Knutti D."/>
            <person name="Weitz C.J."/>
        </authorList>
    </citation>
    <scope>FUNCTION IN HISTONE DEACETYLATION</scope>
    <scope>INTERACTION WITH BMAL1; CLOCK; CRY1; CSNK1E; PER1</scope>
    <scope>IDENTIFICATION IN A COMPLEX WITH SFPQ AND SIN3A</scope>
</reference>
<reference key="38">
    <citation type="journal article" date="2012" name="EMBO J.">
        <title>PML regulates PER2 nuclear localization and circadian function.</title>
        <authorList>
            <person name="Miki T."/>
            <person name="Xu Z."/>
            <person name="Chen-Goodspeed M."/>
            <person name="Liu M."/>
            <person name="Van Oort-Jansen A."/>
            <person name="Rea M.A."/>
            <person name="Zhao Z."/>
            <person name="Lee C.C."/>
            <person name="Chang K.S."/>
        </authorList>
    </citation>
    <scope>SUBCELLULAR LOCATION</scope>
    <scope>INTERACTION WITH PML</scope>
</reference>
<reference key="39">
    <citation type="journal article" date="2012" name="EMBO Rep.">
        <title>CAVIN-3 regulates circadian period length and PER:CRY protein abundance and interactions.</title>
        <authorList>
            <person name="Schneider K."/>
            <person name="Kocher T."/>
            <person name="Andersin T."/>
            <person name="Kurzchalia T."/>
            <person name="Schibler U."/>
            <person name="Gatfield D."/>
        </authorList>
    </citation>
    <scope>INTERACTION WITH CAVIN3 AND CRY2</scope>
</reference>
<reference key="40">
    <citation type="journal article" date="2012" name="FEBS Lett.">
        <title>Loss of mPer2 increases plasma insulin levels by enhanced glucose-stimulated insulin secretion and impaired insulin clearance in mice.</title>
        <authorList>
            <person name="Zhao Y."/>
            <person name="Zhang Y."/>
            <person name="Zhou M."/>
            <person name="Wang S."/>
            <person name="Hua Z."/>
            <person name="Zhang J."/>
        </authorList>
    </citation>
    <scope>FUNCTION IN INSULIN SECRETION</scope>
    <scope>DISRUPTION PHENOTYPE</scope>
</reference>
<reference key="41">
    <citation type="journal article" date="2012" name="Mol. Cell. Biol.">
        <title>Distinct roles of DBHS family members in the circadian transcriptional feedback loop.</title>
        <authorList>
            <person name="Kowalska E."/>
            <person name="Ripperger J.A."/>
            <person name="Muheim C."/>
            <person name="Maier B."/>
            <person name="Kurihara Y."/>
            <person name="Fox A.H."/>
            <person name="Kramer A."/>
            <person name="Brown S.A."/>
        </authorList>
    </citation>
    <scope>INTERACTION WITH SFPQ AND NONO</scope>
</reference>
<reference key="42">
    <citation type="journal article" date="2012" name="Science">
        <title>Feedback regulation of transcriptional termination by the mammalian circadian clock PERIOD complex.</title>
        <authorList>
            <person name="Padmanabhan K."/>
            <person name="Robles M.S."/>
            <person name="Westerling T."/>
            <person name="Weitz C.J."/>
        </authorList>
    </citation>
    <scope>FUNCTION IN TRANSCTIPIONAL TERMINATION INHIBITION</scope>
    <scope>IDENTIFICATION IN A COMPLEX WITH CDK9; DDX5; DHX9; NCBP1 AND POLR2A</scope>
    <scope>INTERACTION WITH SETX</scope>
    <scope>RNA-BINDING</scope>
</reference>
<reference key="43">
    <citation type="journal article" date="2013" name="Am. J. Physiol.">
        <title>High-fat diet-induced hyperinsulinemia and tissue-specific insulin resistance in Cry-deficient mice.</title>
        <authorList>
            <person name="Barclay J.L."/>
            <person name="Shostak A."/>
            <person name="Leliavski A."/>
            <person name="Tsang A.H."/>
            <person name="Johren O."/>
            <person name="Muller-Fielitz H."/>
            <person name="Landgraf D."/>
            <person name="Naujokat N."/>
            <person name="van der Horst G.T."/>
            <person name="Oster H."/>
        </authorList>
    </citation>
    <scope>TISSUE SPECIFICITY</scope>
    <scope>INDUCTION</scope>
</reference>
<reference key="44">
    <citation type="journal article" date="2013" name="Am. J. Physiol.">
        <title>A role for the circadian clock protein Per1 in the regulation of aldosterone levels and renal Na+ retention.</title>
        <authorList>
            <person name="Richards J."/>
            <person name="Cheng K.Y."/>
            <person name="All S."/>
            <person name="Skopis G."/>
            <person name="Jeffers L."/>
            <person name="Lynch I.J."/>
            <person name="Wingo C.S."/>
            <person name="Gumz M.L."/>
        </authorList>
    </citation>
    <scope>TISSUE SPECIFICITY</scope>
</reference>
<reference key="45">
    <citation type="journal article" date="2013" name="PLoS ONE">
        <title>Mammalian TIMELESS is involved in period determination and DNA damage-dependent phase advancing of the circadian clock.</title>
        <authorList>
            <person name="Engelen E."/>
            <person name="Janssens R.C."/>
            <person name="Yagita K."/>
            <person name="Smits V.A."/>
            <person name="van der Horst G.T."/>
            <person name="Tamanini F."/>
        </authorList>
    </citation>
    <scope>FUNCTION</scope>
    <scope>SUBCELLULAR LOCATION</scope>
    <scope>INTERACTION WITH CRY1</scope>
</reference>
<reference key="46">
    <citation type="journal article" date="2013" name="PLoS ONE">
        <title>Cardiac Per2 functions as novel link between fatty acid metabolism and myocardial inflammation during ischemia and reperfusion injury of the heart.</title>
        <authorList>
            <person name="Bonney S."/>
            <person name="Kominsky D."/>
            <person name="Brodsky K."/>
            <person name="Eltzschig H."/>
            <person name="Walker L."/>
            <person name="Eckle T."/>
        </authorList>
    </citation>
    <scope>FUNCTION IN CARDIAC METABOLISM REGULATION</scope>
    <scope>DISRUPTION PHENOTYPE</scope>
</reference>
<reference key="47">
    <citation type="journal article" date="2013" name="Physiol. Rev.">
        <title>Metabolism and the circadian clock converge.</title>
        <authorList>
            <person name="Eckel-Mahan K."/>
            <person name="Sassone-Corsi P."/>
        </authorList>
    </citation>
    <scope>REVIEW</scope>
</reference>
<reference key="48">
    <citation type="journal article" date="2014" name="Exp. Mol. Med.">
        <title>Presence of multiple peripheral circadian oscillators in the tissues controlling voiding function in mice.</title>
        <authorList>
            <person name="Noh J.Y."/>
            <person name="Han D.H."/>
            <person name="Kim M.H."/>
            <person name="Ko I.G."/>
            <person name="Kim S.E."/>
            <person name="Park N."/>
            <person name="Kyoung Choe H."/>
            <person name="Kim K.H."/>
            <person name="Kim K."/>
            <person name="Kim C.J."/>
            <person name="Cho S."/>
        </authorList>
    </citation>
    <scope>INDUCTION</scope>
    <scope>TISSUE SPECIFICITY</scope>
    <scope>DISRUPTION PHENOTYPE</scope>
</reference>
<reference key="49">
    <citation type="journal article" date="2014" name="J. Biol. Chem.">
        <title>Gene model 129 (Gm129) encodes a novel transcriptional repressor that modulates circadian gene expression.</title>
        <authorList>
            <person name="Annayev Y."/>
            <person name="Adar S."/>
            <person name="Chiou Y.Y."/>
            <person name="Lieb J."/>
            <person name="Sancar A."/>
            <person name="Ye R."/>
        </authorList>
    </citation>
    <scope>INTERACTION WITH CIART</scope>
</reference>
<reference key="50">
    <citation type="journal article" date="2014" name="Nat. Struct. Mol. Biol.">
        <title>Temporal orchestration of repressive chromatin modifiers by circadian clock Period complexes.</title>
        <authorList>
            <person name="Duong H.A."/>
            <person name="Weitz C.J."/>
        </authorList>
    </citation>
    <scope>FUNCTION IN HISTONE METHYLATION</scope>
    <scope>IDENTIFICATION IN A COMPLEX WITH CRY1; CSNK1E; HDAC1; CBX3; SUV39H1; SUV39H2 AND TRIM28</scope>
</reference>
<reference key="51">
    <citation type="journal article" date="2014" name="Trends Cell Biol.">
        <title>Molecular architecture of the mammalian circadian clock.</title>
        <authorList>
            <person name="Partch C.L."/>
            <person name="Green C.B."/>
            <person name="Takahashi J.S."/>
        </authorList>
    </citation>
    <scope>REVIEW</scope>
</reference>
<reference key="52">
    <citation type="journal article" date="2018" name="Cell Metab.">
        <title>Autophagy regulates the liver clock and glucose metabolism by degrading CRY1.</title>
        <authorList>
            <person name="Toledo M."/>
            <person name="Batista-Gonzalez A."/>
            <person name="Merheb E."/>
            <person name="Aoun M.L."/>
            <person name="Tarabra E."/>
            <person name="Feng D."/>
            <person name="Sarparanta J."/>
            <person name="Merlo P."/>
            <person name="Botre F."/>
            <person name="Schwartz G.J."/>
            <person name="Pessin J.E."/>
            <person name="Singh R."/>
        </authorList>
    </citation>
    <scope>INTERACTION WITH MAP1LC3B</scope>
</reference>
<reference key="53">
    <citation type="journal article" date="2019" name="Biochem. Biophys. Res. Commun.">
        <title>Sirt6 deacetylase activity regulates circadian rhythms via Per2.</title>
        <authorList>
            <person name="Sun S."/>
            <person name="Liu Z."/>
            <person name="Feng Y."/>
            <person name="Shi L."/>
            <person name="Cao X."/>
            <person name="Cai Y."/>
            <person name="Liu B."/>
        </authorList>
    </citation>
    <scope>ACETYLATION</scope>
    <scope>DEACETYLATION BY SIRT6</scope>
</reference>
<reference key="54">
    <citation type="journal article" date="2009" name="PLoS Biol.">
        <title>Structural and functional analyses of PAS domain interactions of the clock proteins Drosophila PERIOD and mouse PERIOD2.</title>
        <authorList>
            <person name="Hennig S."/>
            <person name="Strauss H.M."/>
            <person name="Vanselow K."/>
            <person name="Yildiz O."/>
            <person name="Schulze S."/>
            <person name="Arens J."/>
            <person name="Kramer A."/>
            <person name="Wolf E."/>
        </authorList>
    </citation>
    <scope>X-RAY CRYSTALLOGRAPHY (2.4 ANGSTROMS) OF 170-473</scope>
    <scope>MUTAGENESIS OF PHE-415; TRP-419 AND ILE-427</scope>
    <scope>SUBUNIT</scope>
</reference>